<gene>
    <name evidence="1" type="primary">rpmA</name>
    <name type="ordered locus">BF1009</name>
</gene>
<proteinExistence type="inferred from homology"/>
<evidence type="ECO:0000255" key="1">
    <source>
        <dbReference type="HAMAP-Rule" id="MF_00539"/>
    </source>
</evidence>
<evidence type="ECO:0000305" key="2"/>
<name>RL27_BACFR</name>
<sequence length="89" mass="9613">MAHKKGVGSSKNGRESQSKRLGVKIFGGEACKAGNIIVRQRGTEFHPGENIGMGKDHTLFALVDGTVNFKVGREDRRYVSIIPAEATEA</sequence>
<reference key="1">
    <citation type="journal article" date="2004" name="Proc. Natl. Acad. Sci. U.S.A.">
        <title>Genomic analysis of Bacteroides fragilis reveals extensive DNA inversions regulating cell surface adaptation.</title>
        <authorList>
            <person name="Kuwahara T."/>
            <person name="Yamashita A."/>
            <person name="Hirakawa H."/>
            <person name="Nakayama H."/>
            <person name="Toh H."/>
            <person name="Okada N."/>
            <person name="Kuhara S."/>
            <person name="Hattori M."/>
            <person name="Hayashi T."/>
            <person name="Ohnishi Y."/>
        </authorList>
    </citation>
    <scope>NUCLEOTIDE SEQUENCE [LARGE SCALE GENOMIC DNA]</scope>
    <source>
        <strain>YCH46</strain>
    </source>
</reference>
<accession>Q64XL7</accession>
<comment type="similarity">
    <text evidence="1">Belongs to the bacterial ribosomal protein bL27 family.</text>
</comment>
<protein>
    <recommendedName>
        <fullName evidence="1">Large ribosomal subunit protein bL27</fullName>
    </recommendedName>
    <alternativeName>
        <fullName evidence="2">50S ribosomal protein L27</fullName>
    </alternativeName>
</protein>
<keyword id="KW-0687">Ribonucleoprotein</keyword>
<keyword id="KW-0689">Ribosomal protein</keyword>
<organism>
    <name type="scientific">Bacteroides fragilis (strain YCH46)</name>
    <dbReference type="NCBI Taxonomy" id="295405"/>
    <lineage>
        <taxon>Bacteria</taxon>
        <taxon>Pseudomonadati</taxon>
        <taxon>Bacteroidota</taxon>
        <taxon>Bacteroidia</taxon>
        <taxon>Bacteroidales</taxon>
        <taxon>Bacteroidaceae</taxon>
        <taxon>Bacteroides</taxon>
    </lineage>
</organism>
<feature type="chain" id="PRO_0000181038" description="Large ribosomal subunit protein bL27">
    <location>
        <begin position="1"/>
        <end position="89"/>
    </location>
</feature>
<dbReference type="EMBL" id="AP006841">
    <property type="protein sequence ID" value="BAD47759.1"/>
    <property type="molecule type" value="Genomic_DNA"/>
</dbReference>
<dbReference type="RefSeq" id="WP_005785336.1">
    <property type="nucleotide sequence ID" value="NZ_UYXF01000020.1"/>
</dbReference>
<dbReference type="RefSeq" id="YP_098293.1">
    <property type="nucleotide sequence ID" value="NC_006347.1"/>
</dbReference>
<dbReference type="SMR" id="Q64XL7"/>
<dbReference type="STRING" id="295405.BF1009"/>
<dbReference type="GeneID" id="60368345"/>
<dbReference type="KEGG" id="bfr:BF1009"/>
<dbReference type="PATRIC" id="fig|295405.11.peg.1007"/>
<dbReference type="HOGENOM" id="CLU_095424_4_0_10"/>
<dbReference type="OrthoDB" id="9803474at2"/>
<dbReference type="Proteomes" id="UP000002197">
    <property type="component" value="Chromosome"/>
</dbReference>
<dbReference type="GO" id="GO:0022625">
    <property type="term" value="C:cytosolic large ribosomal subunit"/>
    <property type="evidence" value="ECO:0007669"/>
    <property type="project" value="TreeGrafter"/>
</dbReference>
<dbReference type="GO" id="GO:0003735">
    <property type="term" value="F:structural constituent of ribosome"/>
    <property type="evidence" value="ECO:0007669"/>
    <property type="project" value="InterPro"/>
</dbReference>
<dbReference type="GO" id="GO:0006412">
    <property type="term" value="P:translation"/>
    <property type="evidence" value="ECO:0007669"/>
    <property type="project" value="UniProtKB-UniRule"/>
</dbReference>
<dbReference type="FunFam" id="2.40.50.100:FF:000026">
    <property type="entry name" value="50S ribosomal protein L27"/>
    <property type="match status" value="1"/>
</dbReference>
<dbReference type="Gene3D" id="2.40.50.100">
    <property type="match status" value="1"/>
</dbReference>
<dbReference type="HAMAP" id="MF_00539">
    <property type="entry name" value="Ribosomal_bL27"/>
    <property type="match status" value="1"/>
</dbReference>
<dbReference type="InterPro" id="IPR001684">
    <property type="entry name" value="Ribosomal_bL27"/>
</dbReference>
<dbReference type="InterPro" id="IPR018261">
    <property type="entry name" value="Ribosomal_bL27_CS"/>
</dbReference>
<dbReference type="NCBIfam" id="TIGR00062">
    <property type="entry name" value="L27"/>
    <property type="match status" value="1"/>
</dbReference>
<dbReference type="PANTHER" id="PTHR15893:SF0">
    <property type="entry name" value="LARGE RIBOSOMAL SUBUNIT PROTEIN BL27M"/>
    <property type="match status" value="1"/>
</dbReference>
<dbReference type="PANTHER" id="PTHR15893">
    <property type="entry name" value="RIBOSOMAL PROTEIN L27"/>
    <property type="match status" value="1"/>
</dbReference>
<dbReference type="Pfam" id="PF01016">
    <property type="entry name" value="Ribosomal_L27"/>
    <property type="match status" value="1"/>
</dbReference>
<dbReference type="PRINTS" id="PR00063">
    <property type="entry name" value="RIBOSOMALL27"/>
</dbReference>
<dbReference type="SUPFAM" id="SSF110324">
    <property type="entry name" value="Ribosomal L27 protein-like"/>
    <property type="match status" value="1"/>
</dbReference>
<dbReference type="PROSITE" id="PS00831">
    <property type="entry name" value="RIBOSOMAL_L27"/>
    <property type="match status" value="1"/>
</dbReference>